<dbReference type="EMBL" id="AE015925">
    <property type="protein sequence ID" value="AAP05217.1"/>
    <property type="molecule type" value="Genomic_DNA"/>
</dbReference>
<dbReference type="RefSeq" id="WP_011006433.1">
    <property type="nucleotide sequence ID" value="NC_003361.3"/>
</dbReference>
<dbReference type="SMR" id="P59809"/>
<dbReference type="STRING" id="227941.CCA_00472"/>
<dbReference type="KEGG" id="cca:CCA_00472"/>
<dbReference type="eggNOG" id="COG0706">
    <property type="taxonomic scope" value="Bacteria"/>
</dbReference>
<dbReference type="HOGENOM" id="CLU_019734_0_0_0"/>
<dbReference type="OrthoDB" id="9780552at2"/>
<dbReference type="Proteomes" id="UP000002193">
    <property type="component" value="Chromosome"/>
</dbReference>
<dbReference type="GO" id="GO:0005886">
    <property type="term" value="C:plasma membrane"/>
    <property type="evidence" value="ECO:0007669"/>
    <property type="project" value="UniProtKB-SubCell"/>
</dbReference>
<dbReference type="GO" id="GO:0032977">
    <property type="term" value="F:membrane insertase activity"/>
    <property type="evidence" value="ECO:0007669"/>
    <property type="project" value="InterPro"/>
</dbReference>
<dbReference type="GO" id="GO:0051205">
    <property type="term" value="P:protein insertion into membrane"/>
    <property type="evidence" value="ECO:0007669"/>
    <property type="project" value="TreeGrafter"/>
</dbReference>
<dbReference type="GO" id="GO:0015031">
    <property type="term" value="P:protein transport"/>
    <property type="evidence" value="ECO:0007669"/>
    <property type="project" value="UniProtKB-KW"/>
</dbReference>
<dbReference type="CDD" id="cd20070">
    <property type="entry name" value="5TM_YidC_Alb3"/>
    <property type="match status" value="1"/>
</dbReference>
<dbReference type="HAMAP" id="MF_01810">
    <property type="entry name" value="YidC_type1"/>
    <property type="match status" value="1"/>
</dbReference>
<dbReference type="InterPro" id="IPR019998">
    <property type="entry name" value="Membr_insert_YidC"/>
</dbReference>
<dbReference type="InterPro" id="IPR001708">
    <property type="entry name" value="YidC/ALB3/OXA1/COX18"/>
</dbReference>
<dbReference type="InterPro" id="IPR028055">
    <property type="entry name" value="YidC/Oxa/ALB_C"/>
</dbReference>
<dbReference type="InterPro" id="IPR047196">
    <property type="entry name" value="YidC_ALB_C"/>
</dbReference>
<dbReference type="NCBIfam" id="NF002168">
    <property type="entry name" value="PRK01001.1"/>
    <property type="match status" value="1"/>
</dbReference>
<dbReference type="NCBIfam" id="TIGR03592">
    <property type="entry name" value="yidC_oxa1_cterm"/>
    <property type="match status" value="1"/>
</dbReference>
<dbReference type="PANTHER" id="PTHR12428:SF65">
    <property type="entry name" value="CYTOCHROME C OXIDASE ASSEMBLY PROTEIN COX18, MITOCHONDRIAL"/>
    <property type="match status" value="1"/>
</dbReference>
<dbReference type="PANTHER" id="PTHR12428">
    <property type="entry name" value="OXA1"/>
    <property type="match status" value="1"/>
</dbReference>
<dbReference type="Pfam" id="PF02096">
    <property type="entry name" value="60KD_IMP"/>
    <property type="match status" value="1"/>
</dbReference>
<dbReference type="PRINTS" id="PR01900">
    <property type="entry name" value="YIDCPROTEIN"/>
</dbReference>
<dbReference type="PROSITE" id="PS51257">
    <property type="entry name" value="PROKAR_LIPOPROTEIN"/>
    <property type="match status" value="1"/>
</dbReference>
<gene>
    <name type="primary">yidC</name>
    <name type="ordered locus">CCA_00472</name>
</gene>
<protein>
    <recommendedName>
        <fullName>Membrane protein insertase YidC</fullName>
    </recommendedName>
    <alternativeName>
        <fullName>Foldase YidC</fullName>
    </alternativeName>
    <alternativeName>
        <fullName>Membrane integrase YidC</fullName>
    </alternativeName>
    <alternativeName>
        <fullName>Membrane protein YidC</fullName>
    </alternativeName>
</protein>
<comment type="function">
    <text evidence="1">Required for the insertion and/or proper folding and/or complex formation of integral membrane proteins into the membrane. Involved in integration of membrane proteins that insert both dependently and independently of the Sec translocase complex, as well as at least some lipoproteins. Aids folding of multispanning membrane proteins (By similarity).</text>
</comment>
<comment type="subunit">
    <text evidence="1">Interacts with the Sec translocase complex via SecD. Specifically interacts with transmembrane segments of nascent integral membrane proteins during membrane integration (By similarity).</text>
</comment>
<comment type="subcellular location">
    <subcellularLocation>
        <location evidence="1">Cell inner membrane</location>
        <topology evidence="1">Multi-pass membrane protein</topology>
    </subcellularLocation>
</comment>
<comment type="similarity">
    <text evidence="3">Belongs to the OXA1/ALB3/YidC family. Type 1 subfamily.</text>
</comment>
<keyword id="KW-0997">Cell inner membrane</keyword>
<keyword id="KW-1003">Cell membrane</keyword>
<keyword id="KW-0143">Chaperone</keyword>
<keyword id="KW-0449">Lipoprotein</keyword>
<keyword id="KW-0472">Membrane</keyword>
<keyword id="KW-0564">Palmitate</keyword>
<keyword id="KW-0653">Protein transport</keyword>
<keyword id="KW-0732">Signal</keyword>
<keyword id="KW-0812">Transmembrane</keyword>
<keyword id="KW-1133">Transmembrane helix</keyword>
<keyword id="KW-0813">Transport</keyword>
<name>YIDC_CHLCV</name>
<evidence type="ECO:0000250" key="1"/>
<evidence type="ECO:0000255" key="2"/>
<evidence type="ECO:0000305" key="3"/>
<reference key="1">
    <citation type="journal article" date="2003" name="Nucleic Acids Res.">
        <title>Genome sequence of Chlamydophila caviae (Chlamydia psittaci GPIC): examining the role of niche-specific genes in the evolution of the Chlamydiaceae.</title>
        <authorList>
            <person name="Read T.D."/>
            <person name="Myers G.S.A."/>
            <person name="Brunham R.C."/>
            <person name="Nelson W.C."/>
            <person name="Paulsen I.T."/>
            <person name="Heidelberg J.F."/>
            <person name="Holtzapple E.K."/>
            <person name="Khouri H.M."/>
            <person name="Federova N.B."/>
            <person name="Carty H.A."/>
            <person name="Umayam L.A."/>
            <person name="Haft D.H."/>
            <person name="Peterson J.D."/>
            <person name="Beanan M.J."/>
            <person name="White O."/>
            <person name="Salzberg S.L."/>
            <person name="Hsia R.-C."/>
            <person name="McClarty G."/>
            <person name="Rank R.G."/>
            <person name="Bavoil P.M."/>
            <person name="Fraser C.M."/>
        </authorList>
    </citation>
    <scope>NUCLEOTIDE SEQUENCE [LARGE SCALE GENOMIC DNA]</scope>
    <source>
        <strain>ATCC VR-813 / DSM 19441 / 03DC25 / GPIC</strain>
    </source>
</reference>
<organism>
    <name type="scientific">Chlamydia caviae (strain ATCC VR-813 / DSM 19441 / 03DC25 / GPIC)</name>
    <name type="common">Chlamydophila caviae</name>
    <dbReference type="NCBI Taxonomy" id="227941"/>
    <lineage>
        <taxon>Bacteria</taxon>
        <taxon>Pseudomonadati</taxon>
        <taxon>Chlamydiota</taxon>
        <taxon>Chlamydiia</taxon>
        <taxon>Chlamydiales</taxon>
        <taxon>Chlamydiaceae</taxon>
        <taxon>Chlamydia/Chlamydophila group</taxon>
        <taxon>Chlamydia</taxon>
    </lineage>
</organism>
<proteinExistence type="inferred from homology"/>
<sequence length="794" mass="88952">MNKRSLLFVSLIGIAFVGCQIFFGYNDFRSCRTLTEKQKTITEQVLAATKSMGLSVSPWTTSLEEETNKNHYAVRVGDKLLLLNQGGSASSVYSSGVRWNFIEETTACDNIHVALYGEANETTTPSNMGKVFLPVTNEDLPVLVVEFRNNQEPVVFLGQYKQEQGKVYNKDSAVYGTSLVFWRSGNEYLPLGIYNSKEERLESLDLPITKAAVFSDSKSANAGANSAQYFVLSNEYMQLIVSQESGSIEGINLPFSSEDNKSIVNEIGFDRELKAQVPSEASFPGLPSVGANNQPVSDTVGGYYPLLRRGILSDAKKRTPSSYHALNIVSGRELTNSVASGYRVSTFNSTMLELESNDGSIKKTYKLPQQQPYAFEVEVGVNRASDDLWITSGIPEVEIMSNAFTPAIKYHVIKKNKGQLDKVKLPKAKDPLALRSGVYPQWILNSNGYFGIILSPLTDIPAGYAASYVPGSSVPTRLSLLSPKNQAYPASKYPGYETLLPLPQKEGTHRFLVYAGPLADPTLRVLDKAYTNSKGESPQYLDCITFRGFFAFITEPFAALLFIIMKFFRMITGSWGISIILLTVFLKLLLYPLNAWSIRSMRRMQKLSPYIQEIQQKYKKEPKRAQMEVMALYKTNKVNPITGCLPLLIQLPFLIVMFDLLKSSFLLRGASFIPGWIDNLTAPDVLFSWTTPVWFLGNEFHLLPILLGIVMFAQQKISASKKKGPATDQQRQQETMGTMMALLFTFMFYNFPSGLNIYWFSSMLLGLIQQWFTNKILDSKHLKNEISVNKKKQR</sequence>
<accession>P59809</accession>
<feature type="signal peptide" evidence="2">
    <location>
        <begin position="1"/>
        <end position="18"/>
    </location>
</feature>
<feature type="chain" id="PRO_0000124703" description="Membrane protein insertase YidC">
    <location>
        <begin position="19"/>
        <end position="794"/>
    </location>
</feature>
<feature type="transmembrane region" description="Helical" evidence="2">
    <location>
        <begin position="449"/>
        <end position="469"/>
    </location>
</feature>
<feature type="transmembrane region" description="Helical" evidence="2">
    <location>
        <begin position="548"/>
        <end position="568"/>
    </location>
</feature>
<feature type="transmembrane region" description="Helical" evidence="2">
    <location>
        <begin position="570"/>
        <end position="590"/>
    </location>
</feature>
<feature type="transmembrane region" description="Helical" evidence="2">
    <location>
        <begin position="641"/>
        <end position="661"/>
    </location>
</feature>
<feature type="transmembrane region" description="Helical" evidence="2">
    <location>
        <begin position="693"/>
        <end position="713"/>
    </location>
</feature>
<feature type="transmembrane region" description="Helical" evidence="2">
    <location>
        <begin position="740"/>
        <end position="760"/>
    </location>
</feature>
<feature type="lipid moiety-binding region" description="N-palmitoyl cysteine" evidence="2">
    <location>
        <position position="19"/>
    </location>
</feature>
<feature type="lipid moiety-binding region" description="S-diacylglycerol cysteine" evidence="2">
    <location>
        <position position="19"/>
    </location>
</feature>